<comment type="function">
    <text evidence="1">One of the primary rRNA binding proteins. Required for association of the 30S and 50S subunits to form the 70S ribosome, for tRNA binding and peptide bond formation. It has been suggested to have peptidyltransferase activity; this is somewhat controversial. Makes several contacts with the 16S rRNA in the 70S ribosome.</text>
</comment>
<comment type="subunit">
    <text evidence="1">Part of the 50S ribosomal subunit. Forms a bridge to the 30S subunit in the 70S ribosome.</text>
</comment>
<comment type="similarity">
    <text evidence="1">Belongs to the universal ribosomal protein uL2 family.</text>
</comment>
<reference key="1">
    <citation type="submission" date="2003-06" db="EMBL/GenBank/DDBJ databases">
        <title>The complete genome sequence of Haemophilus ducreyi.</title>
        <authorList>
            <person name="Munson R.S. Jr."/>
            <person name="Ray W.C."/>
            <person name="Mahairas G."/>
            <person name="Sabo P."/>
            <person name="Mungur R."/>
            <person name="Johnson L."/>
            <person name="Nguyen D."/>
            <person name="Wang J."/>
            <person name="Forst C."/>
            <person name="Hood L."/>
        </authorList>
    </citation>
    <scope>NUCLEOTIDE SEQUENCE [LARGE SCALE GENOMIC DNA]</scope>
    <source>
        <strain>35000HP / ATCC 700724</strain>
    </source>
</reference>
<name>RL2_HAEDU</name>
<evidence type="ECO:0000255" key="1">
    <source>
        <dbReference type="HAMAP-Rule" id="MF_01320"/>
    </source>
</evidence>
<evidence type="ECO:0000256" key="2">
    <source>
        <dbReference type="SAM" id="MobiDB-lite"/>
    </source>
</evidence>
<evidence type="ECO:0000305" key="3"/>
<keyword id="KW-1185">Reference proteome</keyword>
<keyword id="KW-0687">Ribonucleoprotein</keyword>
<keyword id="KW-0689">Ribosomal protein</keyword>
<keyword id="KW-0694">RNA-binding</keyword>
<keyword id="KW-0699">rRNA-binding</keyword>
<proteinExistence type="inferred from homology"/>
<sequence length="273" mass="30012">MAIVKCKPTSAGRRHVVKVVNAELHKGKPYAPLLDTKSKTGGRNNLGRITTRHIGGGHKQHYRLIDFKRNKFDIPAVVERLEYDPNRSANIALVLYKDGERRYILAPKGLSVGDMIQAGASAPIKVGNALPMRNIPVGTTVHNVELKPGKGGQIARSAGAYVQIIAREGNYVTLRLRSGEMRKVLAECIATIGEVGNSEHMLRVLGKAGANRWRGIRPTVRGTAMNPVDHPHGGGEGRNFGKHPVTPWGVQTKGKKTRHNKRTDKYIVRRRGK</sequence>
<protein>
    <recommendedName>
        <fullName evidence="1">Large ribosomal subunit protein uL2</fullName>
    </recommendedName>
    <alternativeName>
        <fullName evidence="3">50S ribosomal protein L2</fullName>
    </alternativeName>
</protein>
<accession>Q7VKD5</accession>
<gene>
    <name evidence="1" type="primary">rplB</name>
    <name type="ordered locus">HD_1980</name>
</gene>
<organism>
    <name type="scientific">Haemophilus ducreyi (strain 35000HP / ATCC 700724)</name>
    <dbReference type="NCBI Taxonomy" id="233412"/>
    <lineage>
        <taxon>Bacteria</taxon>
        <taxon>Pseudomonadati</taxon>
        <taxon>Pseudomonadota</taxon>
        <taxon>Gammaproteobacteria</taxon>
        <taxon>Pasteurellales</taxon>
        <taxon>Pasteurellaceae</taxon>
        <taxon>Haemophilus</taxon>
    </lineage>
</organism>
<feature type="chain" id="PRO_0000129566" description="Large ribosomal subunit protein uL2">
    <location>
        <begin position="1"/>
        <end position="273"/>
    </location>
</feature>
<feature type="region of interest" description="Disordered" evidence="2">
    <location>
        <begin position="221"/>
        <end position="262"/>
    </location>
</feature>
<feature type="compositionally biased region" description="Basic residues" evidence="2">
    <location>
        <begin position="253"/>
        <end position="262"/>
    </location>
</feature>
<dbReference type="EMBL" id="AE017143">
    <property type="protein sequence ID" value="AAP96697.1"/>
    <property type="molecule type" value="Genomic_DNA"/>
</dbReference>
<dbReference type="RefSeq" id="WP_010945718.1">
    <property type="nucleotide sequence ID" value="NC_002940.2"/>
</dbReference>
<dbReference type="SMR" id="Q7VKD5"/>
<dbReference type="STRING" id="233412.HD_1980"/>
<dbReference type="KEGG" id="hdu:HD_1980"/>
<dbReference type="eggNOG" id="COG0090">
    <property type="taxonomic scope" value="Bacteria"/>
</dbReference>
<dbReference type="HOGENOM" id="CLU_036235_2_1_6"/>
<dbReference type="OrthoDB" id="9778722at2"/>
<dbReference type="Proteomes" id="UP000001022">
    <property type="component" value="Chromosome"/>
</dbReference>
<dbReference type="GO" id="GO:0015934">
    <property type="term" value="C:large ribosomal subunit"/>
    <property type="evidence" value="ECO:0007669"/>
    <property type="project" value="InterPro"/>
</dbReference>
<dbReference type="GO" id="GO:0019843">
    <property type="term" value="F:rRNA binding"/>
    <property type="evidence" value="ECO:0007669"/>
    <property type="project" value="UniProtKB-UniRule"/>
</dbReference>
<dbReference type="GO" id="GO:0003735">
    <property type="term" value="F:structural constituent of ribosome"/>
    <property type="evidence" value="ECO:0007669"/>
    <property type="project" value="InterPro"/>
</dbReference>
<dbReference type="GO" id="GO:0016740">
    <property type="term" value="F:transferase activity"/>
    <property type="evidence" value="ECO:0007669"/>
    <property type="project" value="InterPro"/>
</dbReference>
<dbReference type="GO" id="GO:0002181">
    <property type="term" value="P:cytoplasmic translation"/>
    <property type="evidence" value="ECO:0007669"/>
    <property type="project" value="TreeGrafter"/>
</dbReference>
<dbReference type="FunFam" id="2.30.30.30:FF:000001">
    <property type="entry name" value="50S ribosomal protein L2"/>
    <property type="match status" value="1"/>
</dbReference>
<dbReference type="FunFam" id="2.40.50.140:FF:000003">
    <property type="entry name" value="50S ribosomal protein L2"/>
    <property type="match status" value="1"/>
</dbReference>
<dbReference type="FunFam" id="4.10.950.10:FF:000001">
    <property type="entry name" value="50S ribosomal protein L2"/>
    <property type="match status" value="1"/>
</dbReference>
<dbReference type="Gene3D" id="2.30.30.30">
    <property type="match status" value="1"/>
</dbReference>
<dbReference type="Gene3D" id="2.40.50.140">
    <property type="entry name" value="Nucleic acid-binding proteins"/>
    <property type="match status" value="1"/>
</dbReference>
<dbReference type="Gene3D" id="4.10.950.10">
    <property type="entry name" value="Ribosomal protein L2, domain 3"/>
    <property type="match status" value="1"/>
</dbReference>
<dbReference type="HAMAP" id="MF_01320_B">
    <property type="entry name" value="Ribosomal_uL2_B"/>
    <property type="match status" value="1"/>
</dbReference>
<dbReference type="InterPro" id="IPR012340">
    <property type="entry name" value="NA-bd_OB-fold"/>
</dbReference>
<dbReference type="InterPro" id="IPR014722">
    <property type="entry name" value="Rib_uL2_dom2"/>
</dbReference>
<dbReference type="InterPro" id="IPR002171">
    <property type="entry name" value="Ribosomal_uL2"/>
</dbReference>
<dbReference type="InterPro" id="IPR005880">
    <property type="entry name" value="Ribosomal_uL2_bac/org-type"/>
</dbReference>
<dbReference type="InterPro" id="IPR022669">
    <property type="entry name" value="Ribosomal_uL2_C"/>
</dbReference>
<dbReference type="InterPro" id="IPR022671">
    <property type="entry name" value="Ribosomal_uL2_CS"/>
</dbReference>
<dbReference type="InterPro" id="IPR014726">
    <property type="entry name" value="Ribosomal_uL2_dom3"/>
</dbReference>
<dbReference type="InterPro" id="IPR022666">
    <property type="entry name" value="Ribosomal_uL2_RNA-bd_dom"/>
</dbReference>
<dbReference type="InterPro" id="IPR008991">
    <property type="entry name" value="Translation_prot_SH3-like_sf"/>
</dbReference>
<dbReference type="NCBIfam" id="TIGR01171">
    <property type="entry name" value="rplB_bact"/>
    <property type="match status" value="1"/>
</dbReference>
<dbReference type="PANTHER" id="PTHR13691:SF5">
    <property type="entry name" value="LARGE RIBOSOMAL SUBUNIT PROTEIN UL2M"/>
    <property type="match status" value="1"/>
</dbReference>
<dbReference type="PANTHER" id="PTHR13691">
    <property type="entry name" value="RIBOSOMAL PROTEIN L2"/>
    <property type="match status" value="1"/>
</dbReference>
<dbReference type="Pfam" id="PF00181">
    <property type="entry name" value="Ribosomal_L2"/>
    <property type="match status" value="1"/>
</dbReference>
<dbReference type="Pfam" id="PF03947">
    <property type="entry name" value="Ribosomal_L2_C"/>
    <property type="match status" value="1"/>
</dbReference>
<dbReference type="PIRSF" id="PIRSF002158">
    <property type="entry name" value="Ribosomal_L2"/>
    <property type="match status" value="1"/>
</dbReference>
<dbReference type="SMART" id="SM01383">
    <property type="entry name" value="Ribosomal_L2"/>
    <property type="match status" value="1"/>
</dbReference>
<dbReference type="SMART" id="SM01382">
    <property type="entry name" value="Ribosomal_L2_C"/>
    <property type="match status" value="1"/>
</dbReference>
<dbReference type="SUPFAM" id="SSF50249">
    <property type="entry name" value="Nucleic acid-binding proteins"/>
    <property type="match status" value="1"/>
</dbReference>
<dbReference type="SUPFAM" id="SSF50104">
    <property type="entry name" value="Translation proteins SH3-like domain"/>
    <property type="match status" value="1"/>
</dbReference>
<dbReference type="PROSITE" id="PS00467">
    <property type="entry name" value="RIBOSOMAL_L2"/>
    <property type="match status" value="1"/>
</dbReference>